<evidence type="ECO:0000255" key="1">
    <source>
        <dbReference type="HAMAP-Rule" id="MF_01852"/>
    </source>
</evidence>
<accession>Q3BNJ9</accession>
<protein>
    <recommendedName>
        <fullName evidence="1">Threonylcarbamoyl-AMP synthase</fullName>
        <shortName evidence="1">TC-AMP synthase</shortName>
        <ecNumber evidence="1">2.7.7.87</ecNumber>
    </recommendedName>
    <alternativeName>
        <fullName evidence="1">L-threonylcarbamoyladenylate synthase</fullName>
    </alternativeName>
    <alternativeName>
        <fullName evidence="1">t(6)A37 threonylcarbamoyladenosine biosynthesis protein TsaC</fullName>
    </alternativeName>
    <alternativeName>
        <fullName evidence="1">tRNA threonylcarbamoyladenosine biosynthesis protein TsaC</fullName>
    </alternativeName>
</protein>
<comment type="function">
    <text evidence="1">Required for the formation of a threonylcarbamoyl group on adenosine at position 37 (t(6)A37) in tRNAs that read codons beginning with adenine. Catalyzes the conversion of L-threonine, HCO(3)(-)/CO(2) and ATP to give threonylcarbamoyl-AMP (TC-AMP) as the acyladenylate intermediate, with the release of diphosphate.</text>
</comment>
<comment type="catalytic activity">
    <reaction evidence="1">
        <text>L-threonine + hydrogencarbonate + ATP = L-threonylcarbamoyladenylate + diphosphate + H2O</text>
        <dbReference type="Rhea" id="RHEA:36407"/>
        <dbReference type="ChEBI" id="CHEBI:15377"/>
        <dbReference type="ChEBI" id="CHEBI:17544"/>
        <dbReference type="ChEBI" id="CHEBI:30616"/>
        <dbReference type="ChEBI" id="CHEBI:33019"/>
        <dbReference type="ChEBI" id="CHEBI:57926"/>
        <dbReference type="ChEBI" id="CHEBI:73682"/>
        <dbReference type="EC" id="2.7.7.87"/>
    </reaction>
</comment>
<comment type="subcellular location">
    <subcellularLocation>
        <location evidence="1">Cytoplasm</location>
    </subcellularLocation>
</comment>
<comment type="similarity">
    <text evidence="1">Belongs to the SUA5 family. TsaC subfamily.</text>
</comment>
<name>TSAC_XANE5</name>
<dbReference type="EC" id="2.7.7.87" evidence="1"/>
<dbReference type="EMBL" id="AM039952">
    <property type="protein sequence ID" value="CAJ25664.1"/>
    <property type="molecule type" value="Genomic_DNA"/>
</dbReference>
<dbReference type="RefSeq" id="WP_008572029.1">
    <property type="nucleotide sequence ID" value="NZ_CP017190.1"/>
</dbReference>
<dbReference type="SMR" id="Q3BNJ9"/>
<dbReference type="STRING" id="456327.BJD11_02975"/>
<dbReference type="KEGG" id="xcv:XCV3933"/>
<dbReference type="eggNOG" id="COG0009">
    <property type="taxonomic scope" value="Bacteria"/>
</dbReference>
<dbReference type="HOGENOM" id="CLU_031397_6_0_6"/>
<dbReference type="Proteomes" id="UP000007069">
    <property type="component" value="Chromosome"/>
</dbReference>
<dbReference type="GO" id="GO:0005737">
    <property type="term" value="C:cytoplasm"/>
    <property type="evidence" value="ECO:0007669"/>
    <property type="project" value="UniProtKB-SubCell"/>
</dbReference>
<dbReference type="GO" id="GO:0005524">
    <property type="term" value="F:ATP binding"/>
    <property type="evidence" value="ECO:0007669"/>
    <property type="project" value="UniProtKB-UniRule"/>
</dbReference>
<dbReference type="GO" id="GO:0003725">
    <property type="term" value="F:double-stranded RNA binding"/>
    <property type="evidence" value="ECO:0007669"/>
    <property type="project" value="InterPro"/>
</dbReference>
<dbReference type="GO" id="GO:0061710">
    <property type="term" value="F:L-threonylcarbamoyladenylate synthase"/>
    <property type="evidence" value="ECO:0007669"/>
    <property type="project" value="UniProtKB-EC"/>
</dbReference>
<dbReference type="GO" id="GO:0000049">
    <property type="term" value="F:tRNA binding"/>
    <property type="evidence" value="ECO:0007669"/>
    <property type="project" value="TreeGrafter"/>
</dbReference>
<dbReference type="GO" id="GO:0006450">
    <property type="term" value="P:regulation of translational fidelity"/>
    <property type="evidence" value="ECO:0007669"/>
    <property type="project" value="TreeGrafter"/>
</dbReference>
<dbReference type="GO" id="GO:0002949">
    <property type="term" value="P:tRNA threonylcarbamoyladenosine modification"/>
    <property type="evidence" value="ECO:0007669"/>
    <property type="project" value="UniProtKB-UniRule"/>
</dbReference>
<dbReference type="FunFam" id="3.90.870.10:FF:000004">
    <property type="entry name" value="Threonylcarbamoyl-AMP synthase"/>
    <property type="match status" value="1"/>
</dbReference>
<dbReference type="Gene3D" id="3.90.870.10">
    <property type="entry name" value="DHBP synthase"/>
    <property type="match status" value="1"/>
</dbReference>
<dbReference type="HAMAP" id="MF_01852">
    <property type="entry name" value="TsaC"/>
    <property type="match status" value="1"/>
</dbReference>
<dbReference type="InterPro" id="IPR017945">
    <property type="entry name" value="DHBP_synth_RibB-like_a/b_dom"/>
</dbReference>
<dbReference type="InterPro" id="IPR006070">
    <property type="entry name" value="Sua5-like_dom"/>
</dbReference>
<dbReference type="InterPro" id="IPR023535">
    <property type="entry name" value="TC-AMP_synthase"/>
</dbReference>
<dbReference type="InterPro" id="IPR050156">
    <property type="entry name" value="TC-AMP_synthase_SUA5"/>
</dbReference>
<dbReference type="PANTHER" id="PTHR17490">
    <property type="entry name" value="SUA5"/>
    <property type="match status" value="1"/>
</dbReference>
<dbReference type="PANTHER" id="PTHR17490:SF18">
    <property type="entry name" value="THREONYLCARBAMOYL-AMP SYNTHASE"/>
    <property type="match status" value="1"/>
</dbReference>
<dbReference type="Pfam" id="PF01300">
    <property type="entry name" value="Sua5_yciO_yrdC"/>
    <property type="match status" value="1"/>
</dbReference>
<dbReference type="SUPFAM" id="SSF55821">
    <property type="entry name" value="YrdC/RibB"/>
    <property type="match status" value="1"/>
</dbReference>
<dbReference type="PROSITE" id="PS51163">
    <property type="entry name" value="YRDC"/>
    <property type="match status" value="1"/>
</dbReference>
<gene>
    <name evidence="1" type="primary">tsaC</name>
    <name type="synonym">rimN</name>
    <name type="ordered locus">XCV3933</name>
</gene>
<sequence>MTDTLDLDRAVATLTQGGVIAYPTEAVWGLGCDPRQEAAVLRLLEIKRRPVEKGVIVVASSVDLLRDWVDIDALEPARRQDVLASWPGPHTWILPVTARAPRWVTGEHDGLAVRISAHPVVAALCAAWGAPLVSTSANLAGEPPARSRAALDPALLATIDGVVDGETGALAQPTQIRDARSGQILRD</sequence>
<reference key="1">
    <citation type="journal article" date="2005" name="J. Bacteriol.">
        <title>Insights into genome plasticity and pathogenicity of the plant pathogenic Bacterium Xanthomonas campestris pv. vesicatoria revealed by the complete genome sequence.</title>
        <authorList>
            <person name="Thieme F."/>
            <person name="Koebnik R."/>
            <person name="Bekel T."/>
            <person name="Berger C."/>
            <person name="Boch J."/>
            <person name="Buettner D."/>
            <person name="Caldana C."/>
            <person name="Gaigalat L."/>
            <person name="Goesmann A."/>
            <person name="Kay S."/>
            <person name="Kirchner O."/>
            <person name="Lanz C."/>
            <person name="Linke B."/>
            <person name="McHardy A.C."/>
            <person name="Meyer F."/>
            <person name="Mittenhuber G."/>
            <person name="Nies D.H."/>
            <person name="Niesbach-Kloesgen U."/>
            <person name="Patschkowski T."/>
            <person name="Rueckert C."/>
            <person name="Rupp O."/>
            <person name="Schneiker S."/>
            <person name="Schuster S.C."/>
            <person name="Vorhoelter F.J."/>
            <person name="Weber E."/>
            <person name="Puehler A."/>
            <person name="Bonas U."/>
            <person name="Bartels D."/>
            <person name="Kaiser O."/>
        </authorList>
    </citation>
    <scope>NUCLEOTIDE SEQUENCE [LARGE SCALE GENOMIC DNA]</scope>
    <source>
        <strain>85-10</strain>
    </source>
</reference>
<proteinExistence type="inferred from homology"/>
<feature type="chain" id="PRO_0000353013" description="Threonylcarbamoyl-AMP synthase">
    <location>
        <begin position="1"/>
        <end position="187"/>
    </location>
</feature>
<feature type="domain" description="YrdC-like" evidence="1">
    <location>
        <begin position="4"/>
        <end position="187"/>
    </location>
</feature>
<keyword id="KW-0067">ATP-binding</keyword>
<keyword id="KW-0963">Cytoplasm</keyword>
<keyword id="KW-0547">Nucleotide-binding</keyword>
<keyword id="KW-0548">Nucleotidyltransferase</keyword>
<keyword id="KW-0808">Transferase</keyword>
<keyword id="KW-0819">tRNA processing</keyword>
<organism>
    <name type="scientific">Xanthomonas euvesicatoria pv. vesicatoria (strain 85-10)</name>
    <name type="common">Xanthomonas campestris pv. vesicatoria</name>
    <dbReference type="NCBI Taxonomy" id="316273"/>
    <lineage>
        <taxon>Bacteria</taxon>
        <taxon>Pseudomonadati</taxon>
        <taxon>Pseudomonadota</taxon>
        <taxon>Gammaproteobacteria</taxon>
        <taxon>Lysobacterales</taxon>
        <taxon>Lysobacteraceae</taxon>
        <taxon>Xanthomonas</taxon>
    </lineage>
</organism>